<name>ARLY_LISMH</name>
<sequence>MEKLWGGRFQGKSEAWIDDFGASISFDQKMAKEDLAGSLAHVAMLSKCGIIPASEAAEITAGLKILQEKLALGELEFSTVNEDIHLNIEKLLHEEIGPVAGKLHTARSRNDQVATDMHLYLKQAVAEIIQSLKHLRVVLVQKAELHVETIMPGYTHLQHAQPLSFAHHLLAYFGMFTRDLERLEESVKRIDISPLGSAALAGTTFPIDRAYSAELLGFSAVYENSLDGVSDRDFIIEFLSNSSILMMHLSRFCEELILWTSHEFQFVELTDAFSTGSSIMPQKKNPDMAELIRGKTGRVYGNLFGMLTVLKGLPLAYNKDLQEDKEGMFDTLETVQTSLDIFAGMIETMKVNTEIMEESTQKDFSNATELADYLAKKGVPFREAHEIVGKLVLECTQNGIYLQDVALSHYQEINPLIEDDIYVVLSSKTAVQKRNSYGGTGFDQIKVALENTKKTL</sequence>
<evidence type="ECO:0000255" key="1">
    <source>
        <dbReference type="HAMAP-Rule" id="MF_00006"/>
    </source>
</evidence>
<protein>
    <recommendedName>
        <fullName evidence="1">Argininosuccinate lyase</fullName>
        <shortName evidence="1">ASAL</shortName>
        <ecNumber evidence="1">4.3.2.1</ecNumber>
    </recommendedName>
    <alternativeName>
        <fullName evidence="1">Arginosuccinase</fullName>
    </alternativeName>
</protein>
<comment type="catalytic activity">
    <reaction evidence="1">
        <text>2-(N(omega)-L-arginino)succinate = fumarate + L-arginine</text>
        <dbReference type="Rhea" id="RHEA:24020"/>
        <dbReference type="ChEBI" id="CHEBI:29806"/>
        <dbReference type="ChEBI" id="CHEBI:32682"/>
        <dbReference type="ChEBI" id="CHEBI:57472"/>
        <dbReference type="EC" id="4.3.2.1"/>
    </reaction>
</comment>
<comment type="pathway">
    <text evidence="1">Amino-acid biosynthesis; L-arginine biosynthesis; L-arginine from L-ornithine and carbamoyl phosphate: step 3/3.</text>
</comment>
<comment type="subcellular location">
    <subcellularLocation>
        <location evidence="1">Cytoplasm</location>
    </subcellularLocation>
</comment>
<comment type="similarity">
    <text evidence="1">Belongs to the lyase 1 family. Argininosuccinate lyase subfamily.</text>
</comment>
<reference key="1">
    <citation type="journal article" date="2011" name="J. Bacteriol.">
        <title>Genome sequence of lineage III Listeria monocytogenes strain HCC23.</title>
        <authorList>
            <person name="Steele C.L."/>
            <person name="Donaldson J.R."/>
            <person name="Paul D."/>
            <person name="Banes M.M."/>
            <person name="Arick T."/>
            <person name="Bridges S.M."/>
            <person name="Lawrence M.L."/>
        </authorList>
    </citation>
    <scope>NUCLEOTIDE SEQUENCE [LARGE SCALE GENOMIC DNA]</scope>
    <source>
        <strain>HCC23</strain>
    </source>
</reference>
<accession>B8DH27</accession>
<keyword id="KW-0028">Amino-acid biosynthesis</keyword>
<keyword id="KW-0055">Arginine biosynthesis</keyword>
<keyword id="KW-0963">Cytoplasm</keyword>
<keyword id="KW-0456">Lyase</keyword>
<gene>
    <name evidence="1" type="primary">argH</name>
    <name type="ordered locus">LMHCC_0458</name>
</gene>
<dbReference type="EC" id="4.3.2.1" evidence="1"/>
<dbReference type="EMBL" id="CP001175">
    <property type="protein sequence ID" value="ACK38815.1"/>
    <property type="molecule type" value="Genomic_DNA"/>
</dbReference>
<dbReference type="RefSeq" id="WP_012580957.1">
    <property type="nucleotide sequence ID" value="NC_011660.1"/>
</dbReference>
<dbReference type="SMR" id="B8DH27"/>
<dbReference type="KEGG" id="lmh:LMHCC_0458"/>
<dbReference type="HOGENOM" id="CLU_027272_2_3_9"/>
<dbReference type="UniPathway" id="UPA00068">
    <property type="reaction ID" value="UER00114"/>
</dbReference>
<dbReference type="GO" id="GO:0005829">
    <property type="term" value="C:cytosol"/>
    <property type="evidence" value="ECO:0007669"/>
    <property type="project" value="TreeGrafter"/>
</dbReference>
<dbReference type="GO" id="GO:0004056">
    <property type="term" value="F:argininosuccinate lyase activity"/>
    <property type="evidence" value="ECO:0007669"/>
    <property type="project" value="UniProtKB-UniRule"/>
</dbReference>
<dbReference type="GO" id="GO:0042450">
    <property type="term" value="P:arginine biosynthetic process via ornithine"/>
    <property type="evidence" value="ECO:0007669"/>
    <property type="project" value="InterPro"/>
</dbReference>
<dbReference type="GO" id="GO:0006526">
    <property type="term" value="P:L-arginine biosynthetic process"/>
    <property type="evidence" value="ECO:0007669"/>
    <property type="project" value="UniProtKB-UniRule"/>
</dbReference>
<dbReference type="CDD" id="cd01359">
    <property type="entry name" value="Argininosuccinate_lyase"/>
    <property type="match status" value="1"/>
</dbReference>
<dbReference type="FunFam" id="1.10.275.10:FF:000002">
    <property type="entry name" value="Argininosuccinate lyase"/>
    <property type="match status" value="1"/>
</dbReference>
<dbReference type="FunFam" id="1.10.40.30:FF:000001">
    <property type="entry name" value="Argininosuccinate lyase"/>
    <property type="match status" value="1"/>
</dbReference>
<dbReference type="FunFam" id="1.20.200.10:FF:000006">
    <property type="entry name" value="Argininosuccinate lyase"/>
    <property type="match status" value="1"/>
</dbReference>
<dbReference type="Gene3D" id="1.10.40.30">
    <property type="entry name" value="Fumarase/aspartase (C-terminal domain)"/>
    <property type="match status" value="1"/>
</dbReference>
<dbReference type="Gene3D" id="1.20.200.10">
    <property type="entry name" value="Fumarase/aspartase (Central domain)"/>
    <property type="match status" value="1"/>
</dbReference>
<dbReference type="Gene3D" id="1.10.275.10">
    <property type="entry name" value="Fumarase/aspartase (N-terminal domain)"/>
    <property type="match status" value="1"/>
</dbReference>
<dbReference type="HAMAP" id="MF_00006">
    <property type="entry name" value="Arg_succ_lyase"/>
    <property type="match status" value="1"/>
</dbReference>
<dbReference type="InterPro" id="IPR029419">
    <property type="entry name" value="Arg_succ_lyase_C"/>
</dbReference>
<dbReference type="InterPro" id="IPR009049">
    <property type="entry name" value="Argininosuccinate_lyase"/>
</dbReference>
<dbReference type="InterPro" id="IPR024083">
    <property type="entry name" value="Fumarase/histidase_N"/>
</dbReference>
<dbReference type="InterPro" id="IPR020557">
    <property type="entry name" value="Fumarate_lyase_CS"/>
</dbReference>
<dbReference type="InterPro" id="IPR000362">
    <property type="entry name" value="Fumarate_lyase_fam"/>
</dbReference>
<dbReference type="InterPro" id="IPR022761">
    <property type="entry name" value="Fumarate_lyase_N"/>
</dbReference>
<dbReference type="InterPro" id="IPR008948">
    <property type="entry name" value="L-Aspartase-like"/>
</dbReference>
<dbReference type="NCBIfam" id="TIGR00838">
    <property type="entry name" value="argH"/>
    <property type="match status" value="1"/>
</dbReference>
<dbReference type="PANTHER" id="PTHR43814">
    <property type="entry name" value="ARGININOSUCCINATE LYASE"/>
    <property type="match status" value="1"/>
</dbReference>
<dbReference type="PANTHER" id="PTHR43814:SF1">
    <property type="entry name" value="ARGININOSUCCINATE LYASE"/>
    <property type="match status" value="1"/>
</dbReference>
<dbReference type="Pfam" id="PF14698">
    <property type="entry name" value="ASL_C2"/>
    <property type="match status" value="1"/>
</dbReference>
<dbReference type="Pfam" id="PF00206">
    <property type="entry name" value="Lyase_1"/>
    <property type="match status" value="1"/>
</dbReference>
<dbReference type="PRINTS" id="PR00145">
    <property type="entry name" value="ARGSUCLYASE"/>
</dbReference>
<dbReference type="PRINTS" id="PR00149">
    <property type="entry name" value="FUMRATELYASE"/>
</dbReference>
<dbReference type="SUPFAM" id="SSF48557">
    <property type="entry name" value="L-aspartase-like"/>
    <property type="match status" value="1"/>
</dbReference>
<dbReference type="PROSITE" id="PS00163">
    <property type="entry name" value="FUMARATE_LYASES"/>
    <property type="match status" value="1"/>
</dbReference>
<proteinExistence type="inferred from homology"/>
<organism>
    <name type="scientific">Listeria monocytogenes serotype 4a (strain HCC23)</name>
    <dbReference type="NCBI Taxonomy" id="552536"/>
    <lineage>
        <taxon>Bacteria</taxon>
        <taxon>Bacillati</taxon>
        <taxon>Bacillota</taxon>
        <taxon>Bacilli</taxon>
        <taxon>Bacillales</taxon>
        <taxon>Listeriaceae</taxon>
        <taxon>Listeria</taxon>
    </lineage>
</organism>
<feature type="chain" id="PRO_1000116329" description="Argininosuccinate lyase">
    <location>
        <begin position="1"/>
        <end position="456"/>
    </location>
</feature>